<comment type="subcellular location">
    <subcellularLocation>
        <location evidence="2">Plastid</location>
        <location evidence="2">Chloroplast</location>
    </subcellularLocation>
</comment>
<comment type="similarity">
    <text evidence="2">Belongs to the PPR family. P subfamily.</text>
</comment>
<comment type="sequence caution" evidence="2">
    <conflict type="erroneous gene model prediction">
        <sequence resource="EMBL-CDS" id="AAB65486"/>
    </conflict>
</comment>
<comment type="online information" name="Pentatricopeptide repeat proteins">
    <link uri="https://ppr.plantenergy.uwa.edu.au"/>
</comment>
<protein>
    <recommendedName>
        <fullName>Pentatricopeptide repeat-containing protein At1g10910, chloroplastic</fullName>
    </recommendedName>
</protein>
<keyword id="KW-0150">Chloroplast</keyword>
<keyword id="KW-0934">Plastid</keyword>
<keyword id="KW-1185">Reference proteome</keyword>
<keyword id="KW-0677">Repeat</keyword>
<keyword id="KW-0809">Transit peptide</keyword>
<feature type="transit peptide" description="Chloroplast" evidence="1">
    <location>
        <begin position="1"/>
        <end position="72"/>
    </location>
</feature>
<feature type="chain" id="PRO_0000342772" description="Pentatricopeptide repeat-containing protein At1g10910, chloroplastic">
    <location>
        <begin position="73"/>
        <end position="664"/>
    </location>
</feature>
<feature type="repeat" description="PPR 1">
    <location>
        <begin position="165"/>
        <end position="199"/>
    </location>
</feature>
<feature type="repeat" description="PPR 2">
    <location>
        <begin position="200"/>
        <end position="235"/>
    </location>
</feature>
<feature type="repeat" description="PPR 3">
    <location>
        <begin position="236"/>
        <end position="270"/>
    </location>
</feature>
<feature type="repeat" description="PPR 4">
    <location>
        <begin position="271"/>
        <end position="305"/>
    </location>
</feature>
<feature type="repeat" description="PPR 5">
    <location>
        <begin position="306"/>
        <end position="340"/>
    </location>
</feature>
<feature type="repeat" description="PPR 6">
    <location>
        <begin position="341"/>
        <end position="375"/>
    </location>
</feature>
<feature type="repeat" description="PPR 7">
    <location>
        <begin position="376"/>
        <end position="406"/>
    </location>
</feature>
<feature type="repeat" description="PPR 8">
    <location>
        <begin position="411"/>
        <end position="445"/>
    </location>
</feature>
<feature type="repeat" description="PPR 9">
    <location>
        <begin position="446"/>
        <end position="480"/>
    </location>
</feature>
<sequence>METPLLVGLELRCPPHLFNTHSRPSSSLSIPALSLRILTPTAATTSSAVIELPANVAEAPRSKRHSNSYLARKSAISEVQRSSDFLSSLQRLATVLKVQDLNVILRDFGISGRWQDLIQLFEWMQQHGKISVSTYSSCIKFVGAKNVSKALEIYQSIPDESTKINVYICNSILSCLVKNGKLDSCIKLFDQMKRDGLKPDVVTYNTLLAGCIKVKNGYPKAIELIGELPHNGIQMDSVMYGTVLAICASNGRSEEAENFIQQMKVEGHSPNIYHYSSLLNSYSWKGDYKKADELMTEMKSIGLVPNKVMMTTLLKVYIKGGLFDRSRELLSELESAGYAENEMPYCMLMDGLSKAGKLEEARSIFDDMKGKGVRSDGYANSIMISALCRSKRFKEAKELSRDSETTYEKCDLVMLNTMLCAYCRAGEMESVMRMMKKMDEQAVSPDYNTFHILIKYFIKEKLHLLAYQTTLDMHSKGHRLEEELCSSLIYHLGKIRAQAEAFSVYNMLRYSKRTICKELHEKILHILIQGNLLKDAYIVVKDNAKMISQPTLKKFGRAFMISGNINLVNDVLKVLHGSGHKIDQVQFEIAISRYISQPDKKELLLQLLQWMPGQGYVVDSSTRNLILKNSHMFGRLLIAEILSKHHVASRPMIKSRPEQKFRCK</sequence>
<proteinExistence type="evidence at transcript level"/>
<dbReference type="EMBL" id="U95973">
    <property type="protein sequence ID" value="AAB65486.1"/>
    <property type="status" value="ALT_SEQ"/>
    <property type="molecule type" value="Genomic_DNA"/>
</dbReference>
<dbReference type="EMBL" id="CP002684">
    <property type="protein sequence ID" value="AEE28662.1"/>
    <property type="molecule type" value="Genomic_DNA"/>
</dbReference>
<dbReference type="EMBL" id="AK226637">
    <property type="protein sequence ID" value="BAE98748.1"/>
    <property type="molecule type" value="mRNA"/>
</dbReference>
<dbReference type="PIR" id="H86242">
    <property type="entry name" value="H86242"/>
</dbReference>
<dbReference type="SMR" id="Q0WVV0"/>
<dbReference type="FunCoup" id="Q0WVV0">
    <property type="interactions" value="1529"/>
</dbReference>
<dbReference type="STRING" id="3702.Q0WVV0"/>
<dbReference type="PaxDb" id="3702-AT1G10910.1"/>
<dbReference type="ProteomicsDB" id="226402"/>
<dbReference type="EnsemblPlants" id="AT1G10910.1">
    <property type="protein sequence ID" value="AT1G10910.1"/>
    <property type="gene ID" value="AT1G10910"/>
</dbReference>
<dbReference type="GeneID" id="837634"/>
<dbReference type="Gramene" id="AT1G10910.1">
    <property type="protein sequence ID" value="AT1G10910.1"/>
    <property type="gene ID" value="AT1G10910"/>
</dbReference>
<dbReference type="KEGG" id="ath:AT1G10910"/>
<dbReference type="Araport" id="AT1G10910"/>
<dbReference type="TAIR" id="AT1G10910">
    <property type="gene designation" value="EMB3103"/>
</dbReference>
<dbReference type="eggNOG" id="KOG4197">
    <property type="taxonomic scope" value="Eukaryota"/>
</dbReference>
<dbReference type="HOGENOM" id="CLU_022912_0_0_1"/>
<dbReference type="InParanoid" id="Q0WVV0"/>
<dbReference type="PhylomeDB" id="Q0WVV0"/>
<dbReference type="PRO" id="PR:Q0WVV0"/>
<dbReference type="Proteomes" id="UP000006548">
    <property type="component" value="Chromosome 1"/>
</dbReference>
<dbReference type="ExpressionAtlas" id="Q0WVV0">
    <property type="expression patterns" value="baseline and differential"/>
</dbReference>
<dbReference type="GO" id="GO:0009507">
    <property type="term" value="C:chloroplast"/>
    <property type="evidence" value="ECO:0000314"/>
    <property type="project" value="TAIR"/>
</dbReference>
<dbReference type="GO" id="GO:0003729">
    <property type="term" value="F:mRNA binding"/>
    <property type="evidence" value="ECO:0000314"/>
    <property type="project" value="TAIR"/>
</dbReference>
<dbReference type="GO" id="GO:0009658">
    <property type="term" value="P:chloroplast organization"/>
    <property type="evidence" value="ECO:0000315"/>
    <property type="project" value="TAIR"/>
</dbReference>
<dbReference type="GO" id="GO:1900865">
    <property type="term" value="P:chloroplast RNA modification"/>
    <property type="evidence" value="ECO:0000315"/>
    <property type="project" value="TAIR"/>
</dbReference>
<dbReference type="FunFam" id="1.25.40.10:FF:003272">
    <property type="entry name" value="Pentatricopeptide repeat-containing protein At1g10910, chloroplastic"/>
    <property type="match status" value="1"/>
</dbReference>
<dbReference type="Gene3D" id="1.25.40.10">
    <property type="entry name" value="Tetratricopeptide repeat domain"/>
    <property type="match status" value="4"/>
</dbReference>
<dbReference type="InterPro" id="IPR002885">
    <property type="entry name" value="Pentatricopeptide_rpt"/>
</dbReference>
<dbReference type="InterPro" id="IPR011990">
    <property type="entry name" value="TPR-like_helical_dom_sf"/>
</dbReference>
<dbReference type="NCBIfam" id="TIGR00756">
    <property type="entry name" value="PPR"/>
    <property type="match status" value="4"/>
</dbReference>
<dbReference type="PANTHER" id="PTHR46862">
    <property type="entry name" value="OS07G0661900 PROTEIN"/>
    <property type="match status" value="1"/>
</dbReference>
<dbReference type="PANTHER" id="PTHR46862:SF3">
    <property type="entry name" value="OS07G0661900 PROTEIN"/>
    <property type="match status" value="1"/>
</dbReference>
<dbReference type="Pfam" id="PF01535">
    <property type="entry name" value="PPR"/>
    <property type="match status" value="1"/>
</dbReference>
<dbReference type="Pfam" id="PF13041">
    <property type="entry name" value="PPR_2"/>
    <property type="match status" value="3"/>
</dbReference>
<dbReference type="Pfam" id="PF13812">
    <property type="entry name" value="PPR_3"/>
    <property type="match status" value="1"/>
</dbReference>
<dbReference type="PROSITE" id="PS51375">
    <property type="entry name" value="PPR"/>
    <property type="match status" value="11"/>
</dbReference>
<name>PPR31_ARATH</name>
<gene>
    <name type="ordered locus">At1g10910</name>
    <name type="ORF">T19D16.17</name>
</gene>
<accession>Q0WVV0</accession>
<accession>O04094</accession>
<reference key="1">
    <citation type="journal article" date="2000" name="Nature">
        <title>Sequence and analysis of chromosome 1 of the plant Arabidopsis thaliana.</title>
        <authorList>
            <person name="Theologis A."/>
            <person name="Ecker J.R."/>
            <person name="Palm C.J."/>
            <person name="Federspiel N.A."/>
            <person name="Kaul S."/>
            <person name="White O."/>
            <person name="Alonso J."/>
            <person name="Altafi H."/>
            <person name="Araujo R."/>
            <person name="Bowman C.L."/>
            <person name="Brooks S.Y."/>
            <person name="Buehler E."/>
            <person name="Chan A."/>
            <person name="Chao Q."/>
            <person name="Chen H."/>
            <person name="Cheuk R.F."/>
            <person name="Chin C.W."/>
            <person name="Chung M.K."/>
            <person name="Conn L."/>
            <person name="Conway A.B."/>
            <person name="Conway A.R."/>
            <person name="Creasy T.H."/>
            <person name="Dewar K."/>
            <person name="Dunn P."/>
            <person name="Etgu P."/>
            <person name="Feldblyum T.V."/>
            <person name="Feng J.-D."/>
            <person name="Fong B."/>
            <person name="Fujii C.Y."/>
            <person name="Gill J.E."/>
            <person name="Goldsmith A.D."/>
            <person name="Haas B."/>
            <person name="Hansen N.F."/>
            <person name="Hughes B."/>
            <person name="Huizar L."/>
            <person name="Hunter J.L."/>
            <person name="Jenkins J."/>
            <person name="Johnson-Hopson C."/>
            <person name="Khan S."/>
            <person name="Khaykin E."/>
            <person name="Kim C.J."/>
            <person name="Koo H.L."/>
            <person name="Kremenetskaia I."/>
            <person name="Kurtz D.B."/>
            <person name="Kwan A."/>
            <person name="Lam B."/>
            <person name="Langin-Hooper S."/>
            <person name="Lee A."/>
            <person name="Lee J.M."/>
            <person name="Lenz C.A."/>
            <person name="Li J.H."/>
            <person name="Li Y.-P."/>
            <person name="Lin X."/>
            <person name="Liu S.X."/>
            <person name="Liu Z.A."/>
            <person name="Luros J.S."/>
            <person name="Maiti R."/>
            <person name="Marziali A."/>
            <person name="Militscher J."/>
            <person name="Miranda M."/>
            <person name="Nguyen M."/>
            <person name="Nierman W.C."/>
            <person name="Osborne B.I."/>
            <person name="Pai G."/>
            <person name="Peterson J."/>
            <person name="Pham P.K."/>
            <person name="Rizzo M."/>
            <person name="Rooney T."/>
            <person name="Rowley D."/>
            <person name="Sakano H."/>
            <person name="Salzberg S.L."/>
            <person name="Schwartz J.R."/>
            <person name="Shinn P."/>
            <person name="Southwick A.M."/>
            <person name="Sun H."/>
            <person name="Tallon L.J."/>
            <person name="Tambunga G."/>
            <person name="Toriumi M.J."/>
            <person name="Town C.D."/>
            <person name="Utterback T."/>
            <person name="Van Aken S."/>
            <person name="Vaysberg M."/>
            <person name="Vysotskaia V.S."/>
            <person name="Walker M."/>
            <person name="Wu D."/>
            <person name="Yu G."/>
            <person name="Fraser C.M."/>
            <person name="Venter J.C."/>
            <person name="Davis R.W."/>
        </authorList>
    </citation>
    <scope>NUCLEOTIDE SEQUENCE [LARGE SCALE GENOMIC DNA]</scope>
    <source>
        <strain>cv. Columbia</strain>
    </source>
</reference>
<reference key="2">
    <citation type="journal article" date="2017" name="Plant J.">
        <title>Araport11: a complete reannotation of the Arabidopsis thaliana reference genome.</title>
        <authorList>
            <person name="Cheng C.Y."/>
            <person name="Krishnakumar V."/>
            <person name="Chan A.P."/>
            <person name="Thibaud-Nissen F."/>
            <person name="Schobel S."/>
            <person name="Town C.D."/>
        </authorList>
    </citation>
    <scope>GENOME REANNOTATION</scope>
    <source>
        <strain>cv. Columbia</strain>
    </source>
</reference>
<reference key="3">
    <citation type="submission" date="2006-07" db="EMBL/GenBank/DDBJ databases">
        <title>Large-scale analysis of RIKEN Arabidopsis full-length (RAFL) cDNAs.</title>
        <authorList>
            <person name="Totoki Y."/>
            <person name="Seki M."/>
            <person name="Ishida J."/>
            <person name="Nakajima M."/>
            <person name="Enju A."/>
            <person name="Kamiya A."/>
            <person name="Narusaka M."/>
            <person name="Shin-i T."/>
            <person name="Nakagawa M."/>
            <person name="Sakamoto N."/>
            <person name="Oishi K."/>
            <person name="Kohara Y."/>
            <person name="Kobayashi M."/>
            <person name="Toyoda A."/>
            <person name="Sakaki Y."/>
            <person name="Sakurai T."/>
            <person name="Iida K."/>
            <person name="Akiyama K."/>
            <person name="Satou M."/>
            <person name="Toyoda T."/>
            <person name="Konagaya A."/>
            <person name="Carninci P."/>
            <person name="Kawai J."/>
            <person name="Hayashizaki Y."/>
            <person name="Shinozaki K."/>
        </authorList>
    </citation>
    <scope>NUCLEOTIDE SEQUENCE [LARGE SCALE MRNA]</scope>
    <source>
        <strain>cv. Columbia</strain>
    </source>
</reference>
<reference key="4">
    <citation type="journal article" date="2004" name="Plant Cell">
        <title>Genome-wide analysis of Arabidopsis pentatricopeptide repeat proteins reveals their essential role in organelle biogenesis.</title>
        <authorList>
            <person name="Lurin C."/>
            <person name="Andres C."/>
            <person name="Aubourg S."/>
            <person name="Bellaoui M."/>
            <person name="Bitton F."/>
            <person name="Bruyere C."/>
            <person name="Caboche M."/>
            <person name="Debast C."/>
            <person name="Gualberto J."/>
            <person name="Hoffmann B."/>
            <person name="Lecharny A."/>
            <person name="Le Ret M."/>
            <person name="Martin-Magniette M.-L."/>
            <person name="Mireau H."/>
            <person name="Peeters N."/>
            <person name="Renou J.-P."/>
            <person name="Szurek B."/>
            <person name="Taconnat L."/>
            <person name="Small I."/>
        </authorList>
    </citation>
    <scope>GENE FAMILY</scope>
</reference>
<organism>
    <name type="scientific">Arabidopsis thaliana</name>
    <name type="common">Mouse-ear cress</name>
    <dbReference type="NCBI Taxonomy" id="3702"/>
    <lineage>
        <taxon>Eukaryota</taxon>
        <taxon>Viridiplantae</taxon>
        <taxon>Streptophyta</taxon>
        <taxon>Embryophyta</taxon>
        <taxon>Tracheophyta</taxon>
        <taxon>Spermatophyta</taxon>
        <taxon>Magnoliopsida</taxon>
        <taxon>eudicotyledons</taxon>
        <taxon>Gunneridae</taxon>
        <taxon>Pentapetalae</taxon>
        <taxon>rosids</taxon>
        <taxon>malvids</taxon>
        <taxon>Brassicales</taxon>
        <taxon>Brassicaceae</taxon>
        <taxon>Camelineae</taxon>
        <taxon>Arabidopsis</taxon>
    </lineage>
</organism>
<evidence type="ECO:0000255" key="1"/>
<evidence type="ECO:0000305" key="2"/>